<reference key="1">
    <citation type="journal article" date="1997" name="Gene">
        <title>Cloning and sequencing of the dnaK and grpE genes of Legionella pneumophila.</title>
        <authorList>
            <person name="Amemura-Maekawa J."/>
            <person name="Watanabe H."/>
        </authorList>
    </citation>
    <scope>NUCLEOTIDE SEQUENCE [GENOMIC DNA]</scope>
    <source>
        <strain>AM511</strain>
    </source>
</reference>
<dbReference type="EMBL" id="D89498">
    <property type="protein sequence ID" value="BAA22783.1"/>
    <property type="molecule type" value="Genomic_DNA"/>
</dbReference>
<dbReference type="RefSeq" id="WP_015444335.1">
    <property type="nucleotide sequence ID" value="NZ_UGOV01000002.1"/>
</dbReference>
<dbReference type="SMR" id="O32482"/>
<dbReference type="STRING" id="91892.BIZ52_09930"/>
<dbReference type="GeneID" id="57036019"/>
<dbReference type="eggNOG" id="COG0443">
    <property type="taxonomic scope" value="Bacteria"/>
</dbReference>
<dbReference type="GO" id="GO:0005524">
    <property type="term" value="F:ATP binding"/>
    <property type="evidence" value="ECO:0007669"/>
    <property type="project" value="UniProtKB-UniRule"/>
</dbReference>
<dbReference type="GO" id="GO:0140662">
    <property type="term" value="F:ATP-dependent protein folding chaperone"/>
    <property type="evidence" value="ECO:0007669"/>
    <property type="project" value="InterPro"/>
</dbReference>
<dbReference type="GO" id="GO:0051082">
    <property type="term" value="F:unfolded protein binding"/>
    <property type="evidence" value="ECO:0007669"/>
    <property type="project" value="InterPro"/>
</dbReference>
<dbReference type="CDD" id="cd10234">
    <property type="entry name" value="ASKHA_NBD_HSP70_DnaK-like"/>
    <property type="match status" value="1"/>
</dbReference>
<dbReference type="FunFam" id="2.60.34.10:FF:000014">
    <property type="entry name" value="Chaperone protein DnaK HSP70"/>
    <property type="match status" value="1"/>
</dbReference>
<dbReference type="FunFam" id="3.30.30.30:FF:000003">
    <property type="entry name" value="Heat shock protein 9"/>
    <property type="match status" value="1"/>
</dbReference>
<dbReference type="FunFam" id="1.20.1270.10:FF:000001">
    <property type="entry name" value="Molecular chaperone DnaK"/>
    <property type="match status" value="1"/>
</dbReference>
<dbReference type="FunFam" id="3.30.420.40:FF:000004">
    <property type="entry name" value="Molecular chaperone DnaK"/>
    <property type="match status" value="1"/>
</dbReference>
<dbReference type="FunFam" id="3.90.640.10:FF:000003">
    <property type="entry name" value="Molecular chaperone DnaK"/>
    <property type="match status" value="1"/>
</dbReference>
<dbReference type="Gene3D" id="1.20.1270.10">
    <property type="match status" value="1"/>
</dbReference>
<dbReference type="Gene3D" id="3.30.420.40">
    <property type="match status" value="2"/>
</dbReference>
<dbReference type="Gene3D" id="3.90.640.10">
    <property type="entry name" value="Actin, Chain A, domain 4"/>
    <property type="match status" value="1"/>
</dbReference>
<dbReference type="Gene3D" id="2.60.34.10">
    <property type="entry name" value="Substrate Binding Domain Of DNAk, Chain A, domain 1"/>
    <property type="match status" value="1"/>
</dbReference>
<dbReference type="HAMAP" id="MF_00332">
    <property type="entry name" value="DnaK"/>
    <property type="match status" value="1"/>
</dbReference>
<dbReference type="InterPro" id="IPR043129">
    <property type="entry name" value="ATPase_NBD"/>
</dbReference>
<dbReference type="InterPro" id="IPR012725">
    <property type="entry name" value="Chaperone_DnaK"/>
</dbReference>
<dbReference type="InterPro" id="IPR018181">
    <property type="entry name" value="Heat_shock_70_CS"/>
</dbReference>
<dbReference type="InterPro" id="IPR029048">
    <property type="entry name" value="HSP70_C_sf"/>
</dbReference>
<dbReference type="InterPro" id="IPR029047">
    <property type="entry name" value="HSP70_peptide-bd_sf"/>
</dbReference>
<dbReference type="InterPro" id="IPR013126">
    <property type="entry name" value="Hsp_70_fam"/>
</dbReference>
<dbReference type="NCBIfam" id="NF001413">
    <property type="entry name" value="PRK00290.1"/>
    <property type="match status" value="1"/>
</dbReference>
<dbReference type="NCBIfam" id="NF003520">
    <property type="entry name" value="PRK05183.1"/>
    <property type="match status" value="1"/>
</dbReference>
<dbReference type="NCBIfam" id="TIGR02350">
    <property type="entry name" value="prok_dnaK"/>
    <property type="match status" value="1"/>
</dbReference>
<dbReference type="PANTHER" id="PTHR19375">
    <property type="entry name" value="HEAT SHOCK PROTEIN 70KDA"/>
    <property type="match status" value="1"/>
</dbReference>
<dbReference type="Pfam" id="PF00012">
    <property type="entry name" value="HSP70"/>
    <property type="match status" value="1"/>
</dbReference>
<dbReference type="PRINTS" id="PR00301">
    <property type="entry name" value="HEATSHOCK70"/>
</dbReference>
<dbReference type="SUPFAM" id="SSF53067">
    <property type="entry name" value="Actin-like ATPase domain"/>
    <property type="match status" value="2"/>
</dbReference>
<dbReference type="SUPFAM" id="SSF100934">
    <property type="entry name" value="Heat shock protein 70kD (HSP70), C-terminal subdomain"/>
    <property type="match status" value="1"/>
</dbReference>
<dbReference type="SUPFAM" id="SSF100920">
    <property type="entry name" value="Heat shock protein 70kD (HSP70), peptide-binding domain"/>
    <property type="match status" value="1"/>
</dbReference>
<dbReference type="PROSITE" id="PS00297">
    <property type="entry name" value="HSP70_1"/>
    <property type="match status" value="1"/>
</dbReference>
<dbReference type="PROSITE" id="PS00329">
    <property type="entry name" value="HSP70_2"/>
    <property type="match status" value="1"/>
</dbReference>
<dbReference type="PROSITE" id="PS01036">
    <property type="entry name" value="HSP70_3"/>
    <property type="match status" value="1"/>
</dbReference>
<comment type="function">
    <text evidence="1">Acts as a chaperone.</text>
</comment>
<comment type="induction">
    <text evidence="1">By stress conditions e.g. heat shock (By similarity).</text>
</comment>
<comment type="similarity">
    <text evidence="3">Belongs to the heat shock protein 70 family.</text>
</comment>
<feature type="chain" id="PRO_0000078478" description="Chaperone protein DnaK">
    <location>
        <begin position="1"/>
        <end position="644"/>
    </location>
</feature>
<feature type="region of interest" description="Disordered" evidence="2">
    <location>
        <begin position="605"/>
        <end position="644"/>
    </location>
</feature>
<feature type="compositionally biased region" description="Polar residues" evidence="2">
    <location>
        <begin position="609"/>
        <end position="623"/>
    </location>
</feature>
<feature type="compositionally biased region" description="Acidic residues" evidence="2">
    <location>
        <begin position="629"/>
        <end position="644"/>
    </location>
</feature>
<feature type="modified residue" description="Phosphothreonine; by autocatalysis" evidence="1">
    <location>
        <position position="199"/>
    </location>
</feature>
<sequence length="644" mass="70087">MAKIIGIDLGTTNSCVAVMEGDKPKVIENSEGHRTTPSIVAFTDDNEILVGQSAKRQSVTNPEKTLFAIKRLIGRRFDDPIVQKDIKMVPYKIMKADNGDAWVRVKDQDKAPPQISAEVLRKMKKTAEDYLGEEVKEAVITVPAYFNDSQRQATKDAGRIAGLEVKRIINEPTAAALAYGMDKKRGDSVIAVYDLGGGTFDISIIEIAEVDGEHQFEVLATNGDTFLGGEDFDLALIEYLASEFKKDTGIDLHNDPLALQRLKEAAEKAKIELSSAQQTDVNLPYITADASGPKHLNIKLTRAKLESLVEKLVERTIEPCKTALKDAGLTVSQINEVILVGGQTRMPLVQKTVEEFFGKEPRKDVNPDEAVAVGAAIQAAVLSGEVKDILLLDVTPLSLGIETMGGVMTKLIEKNTTIPTKATQVFSTADDNQTAVTVHVLQGEREQASANKSLGRFDLRDIPPAPRGVPQIEVTFDIDANGILNVSAKDKATGKAQSIVIKASSGLSEEEVAAMVKDAQSHAEEDKKFKEMAELRNQADSLIHSCEKSMKDLADELSEDEKRGIETAISELKEAVQGTDKARIEDKLKVLTDASAKMAERIYAKKSSEGQAAQGQTQSQESTKPAEEGVVDAEFEEVKEEDKK</sequence>
<evidence type="ECO:0000250" key="1"/>
<evidence type="ECO:0000256" key="2">
    <source>
        <dbReference type="SAM" id="MobiDB-lite"/>
    </source>
</evidence>
<evidence type="ECO:0000305" key="3"/>
<name>DNAK_LEGPN</name>
<gene>
    <name type="primary">dnaK</name>
</gene>
<keyword id="KW-0067">ATP-binding</keyword>
<keyword id="KW-0143">Chaperone</keyword>
<keyword id="KW-0547">Nucleotide-binding</keyword>
<keyword id="KW-0597">Phosphoprotein</keyword>
<keyword id="KW-0346">Stress response</keyword>
<organism>
    <name type="scientific">Legionella pneumophila</name>
    <dbReference type="NCBI Taxonomy" id="446"/>
    <lineage>
        <taxon>Bacteria</taxon>
        <taxon>Pseudomonadati</taxon>
        <taxon>Pseudomonadota</taxon>
        <taxon>Gammaproteobacteria</taxon>
        <taxon>Legionellales</taxon>
        <taxon>Legionellaceae</taxon>
        <taxon>Legionella</taxon>
    </lineage>
</organism>
<proteinExistence type="inferred from homology"/>
<protein>
    <recommendedName>
        <fullName>Chaperone protein DnaK</fullName>
    </recommendedName>
    <alternativeName>
        <fullName>HSP70</fullName>
    </alternativeName>
    <alternativeName>
        <fullName>Heat shock 70 kDa protein</fullName>
    </alternativeName>
    <alternativeName>
        <fullName>Heat shock protein 70</fullName>
    </alternativeName>
</protein>
<accession>O32482</accession>